<dbReference type="EMBL" id="AF033498">
    <property type="protein sequence ID" value="AAB87500.1"/>
    <property type="molecule type" value="Genomic_DNA"/>
</dbReference>
<dbReference type="RefSeq" id="WP_004246325.1">
    <property type="nucleotide sequence ID" value="NZ_WURR01000011.1"/>
</dbReference>
<dbReference type="SMR" id="O31207"/>
<dbReference type="STRING" id="584.AOUC001_17880"/>
<dbReference type="GeneID" id="6800511"/>
<dbReference type="PATRIC" id="fig|584.106.peg.216"/>
<dbReference type="OMA" id="AMMELMY"/>
<dbReference type="OrthoDB" id="9801717at2"/>
<dbReference type="GO" id="GO:0005737">
    <property type="term" value="C:cytoplasm"/>
    <property type="evidence" value="ECO:0007669"/>
    <property type="project" value="UniProtKB-SubCell"/>
</dbReference>
<dbReference type="GO" id="GO:0003677">
    <property type="term" value="F:DNA binding"/>
    <property type="evidence" value="ECO:0007669"/>
    <property type="project" value="UniProtKB-KW"/>
</dbReference>
<dbReference type="GO" id="GO:0009037">
    <property type="term" value="F:tyrosine-based site-specific recombinase activity"/>
    <property type="evidence" value="ECO:0007669"/>
    <property type="project" value="UniProtKB-UniRule"/>
</dbReference>
<dbReference type="GO" id="GO:0051301">
    <property type="term" value="P:cell division"/>
    <property type="evidence" value="ECO:0007669"/>
    <property type="project" value="UniProtKB-KW"/>
</dbReference>
<dbReference type="GO" id="GO:0007059">
    <property type="term" value="P:chromosome segregation"/>
    <property type="evidence" value="ECO:0007669"/>
    <property type="project" value="UniProtKB-UniRule"/>
</dbReference>
<dbReference type="GO" id="GO:0006313">
    <property type="term" value="P:DNA transposition"/>
    <property type="evidence" value="ECO:0007669"/>
    <property type="project" value="UniProtKB-UniRule"/>
</dbReference>
<dbReference type="CDD" id="cd00798">
    <property type="entry name" value="INT_XerDC_C"/>
    <property type="match status" value="1"/>
</dbReference>
<dbReference type="FunFam" id="1.10.443.10:FF:000002">
    <property type="entry name" value="Tyrosine recombinase XerC"/>
    <property type="match status" value="1"/>
</dbReference>
<dbReference type="Gene3D" id="1.10.150.130">
    <property type="match status" value="1"/>
</dbReference>
<dbReference type="Gene3D" id="1.10.443.10">
    <property type="entry name" value="Intergrase catalytic core"/>
    <property type="match status" value="1"/>
</dbReference>
<dbReference type="HAMAP" id="MF_01808">
    <property type="entry name" value="Recomb_XerC_XerD"/>
    <property type="match status" value="1"/>
</dbReference>
<dbReference type="InterPro" id="IPR044068">
    <property type="entry name" value="CB"/>
</dbReference>
<dbReference type="InterPro" id="IPR011010">
    <property type="entry name" value="DNA_brk_join_enz"/>
</dbReference>
<dbReference type="InterPro" id="IPR013762">
    <property type="entry name" value="Integrase-like_cat_sf"/>
</dbReference>
<dbReference type="InterPro" id="IPR002104">
    <property type="entry name" value="Integrase_catalytic"/>
</dbReference>
<dbReference type="InterPro" id="IPR010998">
    <property type="entry name" value="Integrase_recombinase_N"/>
</dbReference>
<dbReference type="InterPro" id="IPR004107">
    <property type="entry name" value="Integrase_SAM-like_N"/>
</dbReference>
<dbReference type="InterPro" id="IPR011931">
    <property type="entry name" value="Recomb_XerC"/>
</dbReference>
<dbReference type="InterPro" id="IPR023009">
    <property type="entry name" value="Tyrosine_recombinase_XerC/XerD"/>
</dbReference>
<dbReference type="InterPro" id="IPR050090">
    <property type="entry name" value="Tyrosine_recombinase_XerCD"/>
</dbReference>
<dbReference type="NCBIfam" id="NF001399">
    <property type="entry name" value="PRK00283.1"/>
    <property type="match status" value="1"/>
</dbReference>
<dbReference type="NCBIfam" id="TIGR02224">
    <property type="entry name" value="recomb_XerC"/>
    <property type="match status" value="1"/>
</dbReference>
<dbReference type="PANTHER" id="PTHR30349">
    <property type="entry name" value="PHAGE INTEGRASE-RELATED"/>
    <property type="match status" value="1"/>
</dbReference>
<dbReference type="PANTHER" id="PTHR30349:SF81">
    <property type="entry name" value="TYROSINE RECOMBINASE XERC"/>
    <property type="match status" value="1"/>
</dbReference>
<dbReference type="Pfam" id="PF02899">
    <property type="entry name" value="Phage_int_SAM_1"/>
    <property type="match status" value="1"/>
</dbReference>
<dbReference type="Pfam" id="PF00589">
    <property type="entry name" value="Phage_integrase"/>
    <property type="match status" value="1"/>
</dbReference>
<dbReference type="SUPFAM" id="SSF56349">
    <property type="entry name" value="DNA breaking-rejoining enzymes"/>
    <property type="match status" value="1"/>
</dbReference>
<dbReference type="SUPFAM" id="SSF47823">
    <property type="entry name" value="lambda integrase-like, N-terminal domain"/>
    <property type="match status" value="1"/>
</dbReference>
<dbReference type="PROSITE" id="PS51900">
    <property type="entry name" value="CB"/>
    <property type="match status" value="1"/>
</dbReference>
<dbReference type="PROSITE" id="PS51898">
    <property type="entry name" value="TYR_RECOMBINASE"/>
    <property type="match status" value="1"/>
</dbReference>
<feature type="chain" id="PRO_0000095313" description="Tyrosine recombinase XerC">
    <location>
        <begin position="1"/>
        <end position="307"/>
    </location>
</feature>
<feature type="domain" description="Core-binding (CB)" evidence="3">
    <location>
        <begin position="9"/>
        <end position="95"/>
    </location>
</feature>
<feature type="domain" description="Tyr recombinase" evidence="2">
    <location>
        <begin position="116"/>
        <end position="296"/>
    </location>
</feature>
<feature type="active site" evidence="1">
    <location>
        <position position="155"/>
    </location>
</feature>
<feature type="active site" evidence="1">
    <location>
        <position position="179"/>
    </location>
</feature>
<feature type="active site" evidence="1">
    <location>
        <position position="248"/>
    </location>
</feature>
<feature type="active site" evidence="1">
    <location>
        <position position="251"/>
    </location>
</feature>
<feature type="active site" evidence="1">
    <location>
        <position position="274"/>
    </location>
</feature>
<feature type="active site" description="O-(3'-phospho-DNA)-tyrosine intermediate" evidence="1">
    <location>
        <position position="283"/>
    </location>
</feature>
<proteinExistence type="evidence at protein level"/>
<keyword id="KW-0131">Cell cycle</keyword>
<keyword id="KW-0132">Cell division</keyword>
<keyword id="KW-0159">Chromosome partition</keyword>
<keyword id="KW-0963">Cytoplasm</keyword>
<keyword id="KW-0229">DNA integration</keyword>
<keyword id="KW-0233">DNA recombination</keyword>
<keyword id="KW-0238">DNA-binding</keyword>
<protein>
    <recommendedName>
        <fullName evidence="1">Tyrosine recombinase XerC</fullName>
    </recommendedName>
</protein>
<organism>
    <name type="scientific">Proteus mirabilis</name>
    <dbReference type="NCBI Taxonomy" id="584"/>
    <lineage>
        <taxon>Bacteria</taxon>
        <taxon>Pseudomonadati</taxon>
        <taxon>Pseudomonadota</taxon>
        <taxon>Gammaproteobacteria</taxon>
        <taxon>Enterobacterales</taxon>
        <taxon>Morganellaceae</taxon>
        <taxon>Proteus</taxon>
    </lineage>
</organism>
<evidence type="ECO:0000255" key="1">
    <source>
        <dbReference type="HAMAP-Rule" id="MF_01808"/>
    </source>
</evidence>
<evidence type="ECO:0000255" key="2">
    <source>
        <dbReference type="PROSITE-ProRule" id="PRU01246"/>
    </source>
</evidence>
<evidence type="ECO:0000255" key="3">
    <source>
        <dbReference type="PROSITE-ProRule" id="PRU01248"/>
    </source>
</evidence>
<accession>O31207</accession>
<sequence>MSQIIDVPETLSLAIDSFLSYIEVERRLSPVTVENYQRQLMTIAQMMVAIKINQWSLLESQHVRMLLAKSHRSGLQPASLALRFSALRSFLDWQVSQGMLAVNPAKGVRTPKSGRHLPKNMDVDEVSQLMNIDLKDPLSVRDRTMLEVMYGAGLRLSELTNLNINDIDLQEGEVRVLGKGSKERKVPLGRKAVEWLQHWFAMRELYSPEDTAVFISTKSGKRLSVRSVQKRFELWGVKQGLSSHVNPHKLRHSFATHLLESSGDLRAVQELLGHANLSTTQVYTHLDFQHLAKVYDAAHPRAKREKS</sequence>
<gene>
    <name evidence="1" type="primary">xerC</name>
</gene>
<comment type="function">
    <text evidence="1">Site-specific tyrosine recombinase, which acts by catalyzing the cutting and rejoining of the recombining DNA molecules. Binds cooperatively to specific DNA consensus sequences that are separated from XerD binding sites by a short central region, forming the heterotetrameric XerC-XerD complex that recombines DNA substrates. The complex is essential to convert dimers of the bacterial chromosome into monomers to permit their segregation at cell division. It also contributes to the segregational stability of plasmids. In the complex XerC specifically exchanges the top DNA strands.</text>
</comment>
<comment type="activity regulation">
    <text evidence="1">FtsK may regulate the catalytic switch between XerC and XerD in the heterotetrameric complex during the two steps of the recombination process.</text>
</comment>
<comment type="subunit">
    <text evidence="1">Forms a cyclic heterotetrameric complex composed of two molecules of XerC and two molecules of XerD, in which XerC interacts with XerD via its C-terminal region, XerD interacts with XerC via its C-terminal region and so on.</text>
</comment>
<comment type="subcellular location">
    <subcellularLocation>
        <location evidence="1">Cytoplasm</location>
    </subcellularLocation>
</comment>
<comment type="similarity">
    <text evidence="1">Belongs to the 'phage' integrase family. XerC subfamily.</text>
</comment>
<reference key="1">
    <citation type="journal article" date="1998" name="FEMS Microbiol. Lett.">
        <title>Cloning and characterisation of the Proteus mirabilis xerD gene.</title>
        <authorList>
            <person name="Villion M."/>
            <person name="Szatmari G."/>
        </authorList>
    </citation>
    <scope>NUCLEOTIDE SEQUENCE [GENOMIC DNA]</scope>
    <scope>CHARACTERIZATION</scope>
    <source>
        <strain>UM-240-82</strain>
    </source>
</reference>
<name>XERC_PROMI</name>